<accession>O62690</accession>
<proteinExistence type="inferred from homology"/>
<gene>
    <name type="primary">PMCH</name>
</gene>
<comment type="subcellular location">
    <subcellularLocation>
        <location evidence="1">Secreted</location>
    </subcellularLocation>
</comment>
<comment type="similarity">
    <text evidence="3">Belongs to the melanin-concentrating hormone family.</text>
</comment>
<organism>
    <name type="scientific">Hylobates lar</name>
    <name type="common">Lar gibbon</name>
    <name type="synonym">White-handed gibbon</name>
    <dbReference type="NCBI Taxonomy" id="9580"/>
    <lineage>
        <taxon>Eukaryota</taxon>
        <taxon>Metazoa</taxon>
        <taxon>Chordata</taxon>
        <taxon>Craniata</taxon>
        <taxon>Vertebrata</taxon>
        <taxon>Euteleostomi</taxon>
        <taxon>Mammalia</taxon>
        <taxon>Eutheria</taxon>
        <taxon>Euarchontoglires</taxon>
        <taxon>Primates</taxon>
        <taxon>Haplorrhini</taxon>
        <taxon>Catarrhini</taxon>
        <taxon>Hylobatidae</taxon>
        <taxon>Hylobates</taxon>
    </lineage>
</organism>
<reference key="1">
    <citation type="journal article" date="1998" name="Mol. Biol. Evol.">
        <title>Emergence of a brain-expressed variant melanin-concentrating hormone gene during higher primate evolution: a gene 'in search of a function'.</title>
        <authorList>
            <person name="Viale A."/>
            <person name="Ortola C."/>
            <person name="Richard F."/>
            <person name="Vernier P."/>
            <person name="Presse F."/>
            <person name="Schilling S."/>
            <person name="Dutrillaux B."/>
            <person name="Nahon J.-L."/>
        </authorList>
    </citation>
    <scope>NUCLEOTIDE SEQUENCE [GENOMIC DNA]</scope>
</reference>
<dbReference type="EMBL" id="AF029398">
    <property type="protein sequence ID" value="AAC05251.1"/>
    <property type="molecule type" value="Genomic_DNA"/>
</dbReference>
<dbReference type="GO" id="GO:0005576">
    <property type="term" value="C:extracellular region"/>
    <property type="evidence" value="ECO:0007669"/>
    <property type="project" value="UniProtKB-SubCell"/>
</dbReference>
<dbReference type="GO" id="GO:0045202">
    <property type="term" value="C:synapse"/>
    <property type="evidence" value="ECO:0007669"/>
    <property type="project" value="GOC"/>
</dbReference>
<dbReference type="GO" id="GO:0030354">
    <property type="term" value="F:melanin-concentrating hormone activity"/>
    <property type="evidence" value="ECO:0007669"/>
    <property type="project" value="InterPro"/>
</dbReference>
<dbReference type="GO" id="GO:0031777">
    <property type="term" value="F:type 1 melanin-concentrating hormone receptor binding"/>
    <property type="evidence" value="ECO:0007669"/>
    <property type="project" value="TreeGrafter"/>
</dbReference>
<dbReference type="GO" id="GO:0007268">
    <property type="term" value="P:chemical synaptic transmission"/>
    <property type="evidence" value="ECO:0007669"/>
    <property type="project" value="InterPro"/>
</dbReference>
<dbReference type="InterPro" id="IPR005456">
    <property type="entry name" value="Prepro-melanin_conc_hormone"/>
</dbReference>
<dbReference type="PANTHER" id="PTHR12091">
    <property type="entry name" value="MELANIN-CONCENTRATING HORMONE"/>
    <property type="match status" value="1"/>
</dbReference>
<dbReference type="PANTHER" id="PTHR12091:SF0">
    <property type="entry name" value="PRO-MCH"/>
    <property type="match status" value="1"/>
</dbReference>
<evidence type="ECO:0000250" key="1"/>
<evidence type="ECO:0000255" key="2"/>
<evidence type="ECO:0000305" key="3"/>
<feature type="signal peptide" evidence="2">
    <location>
        <begin position="1" status="less than"/>
        <end position="20"/>
    </location>
</feature>
<feature type="chain" id="PRO_0000019108" description="Pro-MCH">
    <location>
        <begin position="21"/>
        <end position="71" status="greater than"/>
    </location>
</feature>
<feature type="non-terminal residue">
    <location>
        <position position="1"/>
    </location>
</feature>
<feature type="non-terminal residue">
    <location>
        <position position="71"/>
    </location>
</feature>
<sequence length="71" mass="7940">AKMNLSSYILILTFSLFSQGILLSASKSIRNLDDDMVFNTFRLGKAFQKEDTAEKSVIAPSLEQYKSDESS</sequence>
<keyword id="KW-0964">Secreted</keyword>
<keyword id="KW-0732">Signal</keyword>
<name>MCH_HYLLA</name>
<protein>
    <recommendedName>
        <fullName>Pro-MCH</fullName>
    </recommendedName>
</protein>